<gene>
    <name evidence="1" type="primary">aroE</name>
    <name type="ordered locus">XCC3953</name>
</gene>
<proteinExistence type="inferred from homology"/>
<name>AROE_XANCP</name>
<organism>
    <name type="scientific">Xanthomonas campestris pv. campestris (strain ATCC 33913 / DSM 3586 / NCPPB 528 / LMG 568 / P 25)</name>
    <dbReference type="NCBI Taxonomy" id="190485"/>
    <lineage>
        <taxon>Bacteria</taxon>
        <taxon>Pseudomonadati</taxon>
        <taxon>Pseudomonadota</taxon>
        <taxon>Gammaproteobacteria</taxon>
        <taxon>Lysobacterales</taxon>
        <taxon>Lysobacteraceae</taxon>
        <taxon>Xanthomonas</taxon>
    </lineage>
</organism>
<accession>Q8P3W6</accession>
<evidence type="ECO:0000255" key="1">
    <source>
        <dbReference type="HAMAP-Rule" id="MF_00222"/>
    </source>
</evidence>
<reference key="1">
    <citation type="journal article" date="2002" name="Nature">
        <title>Comparison of the genomes of two Xanthomonas pathogens with differing host specificities.</title>
        <authorList>
            <person name="da Silva A.C.R."/>
            <person name="Ferro J.A."/>
            <person name="Reinach F.C."/>
            <person name="Farah C.S."/>
            <person name="Furlan L.R."/>
            <person name="Quaggio R.B."/>
            <person name="Monteiro-Vitorello C.B."/>
            <person name="Van Sluys M.A."/>
            <person name="Almeida N.F. Jr."/>
            <person name="Alves L.M.C."/>
            <person name="do Amaral A.M."/>
            <person name="Bertolini M.C."/>
            <person name="Camargo L.E.A."/>
            <person name="Camarotte G."/>
            <person name="Cannavan F."/>
            <person name="Cardozo J."/>
            <person name="Chambergo F."/>
            <person name="Ciapina L.P."/>
            <person name="Cicarelli R.M.B."/>
            <person name="Coutinho L.L."/>
            <person name="Cursino-Santos J.R."/>
            <person name="El-Dorry H."/>
            <person name="Faria J.B."/>
            <person name="Ferreira A.J.S."/>
            <person name="Ferreira R.C.C."/>
            <person name="Ferro M.I.T."/>
            <person name="Formighieri E.F."/>
            <person name="Franco M.C."/>
            <person name="Greggio C.C."/>
            <person name="Gruber A."/>
            <person name="Katsuyama A.M."/>
            <person name="Kishi L.T."/>
            <person name="Leite R.P."/>
            <person name="Lemos E.G.M."/>
            <person name="Lemos M.V.F."/>
            <person name="Locali E.C."/>
            <person name="Machado M.A."/>
            <person name="Madeira A.M.B.N."/>
            <person name="Martinez-Rossi N.M."/>
            <person name="Martins E.C."/>
            <person name="Meidanis J."/>
            <person name="Menck C.F.M."/>
            <person name="Miyaki C.Y."/>
            <person name="Moon D.H."/>
            <person name="Moreira L.M."/>
            <person name="Novo M.T.M."/>
            <person name="Okura V.K."/>
            <person name="Oliveira M.C."/>
            <person name="Oliveira V.R."/>
            <person name="Pereira H.A."/>
            <person name="Rossi A."/>
            <person name="Sena J.A.D."/>
            <person name="Silva C."/>
            <person name="de Souza R.F."/>
            <person name="Spinola L.A.F."/>
            <person name="Takita M.A."/>
            <person name="Tamura R.E."/>
            <person name="Teixeira E.C."/>
            <person name="Tezza R.I.D."/>
            <person name="Trindade dos Santos M."/>
            <person name="Truffi D."/>
            <person name="Tsai S.M."/>
            <person name="White F.F."/>
            <person name="Setubal J.C."/>
            <person name="Kitajima J.P."/>
        </authorList>
    </citation>
    <scope>NUCLEOTIDE SEQUENCE [LARGE SCALE GENOMIC DNA]</scope>
    <source>
        <strain>ATCC 33913 / DSM 3586 / NCPPB 528 / LMG 568 / P 25</strain>
    </source>
</reference>
<protein>
    <recommendedName>
        <fullName evidence="1">Shikimate dehydrogenase (NADP(+))</fullName>
        <shortName evidence="1">SDH</shortName>
        <ecNumber evidence="1">1.1.1.25</ecNumber>
    </recommendedName>
</protein>
<sequence>MPVSRYAVFGHPVAHSLSPAIHADFGKQTGIALDYTAIDAAPEEFTAALERFAADGGKGANVTLPLKEAAFALSASLSDRARVAGAVNTLVRNDGQWQGDNTDGAGLVRDLTERHGLDLRGRRVLLLGAGGAARGVAPALLEAGITEMVVVNRSPERADALCDALGEPGRVVSRYLEDLRELGDFELIVNATAAGRDRDAGAFALPLGLVNSLTAAVDLNYGATAIAFLAWARSAQCRYAIDGLGMLVEQAAESFALWHGVRPQTDPVYDALRARDAVLVSAD</sequence>
<feature type="chain" id="PRO_0000136053" description="Shikimate dehydrogenase (NADP(+))">
    <location>
        <begin position="1"/>
        <end position="283"/>
    </location>
</feature>
<feature type="active site" description="Proton acceptor" evidence="1">
    <location>
        <position position="67"/>
    </location>
</feature>
<feature type="binding site" evidence="1">
    <location>
        <begin position="16"/>
        <end position="18"/>
    </location>
    <ligand>
        <name>shikimate</name>
        <dbReference type="ChEBI" id="CHEBI:36208"/>
    </ligand>
</feature>
<feature type="binding site" evidence="1">
    <location>
        <position position="63"/>
    </location>
    <ligand>
        <name>shikimate</name>
        <dbReference type="ChEBI" id="CHEBI:36208"/>
    </ligand>
</feature>
<feature type="binding site" evidence="1">
    <location>
        <position position="79"/>
    </location>
    <ligand>
        <name>NADP(+)</name>
        <dbReference type="ChEBI" id="CHEBI:58349"/>
    </ligand>
</feature>
<feature type="binding site" evidence="1">
    <location>
        <position position="88"/>
    </location>
    <ligand>
        <name>shikimate</name>
        <dbReference type="ChEBI" id="CHEBI:36208"/>
    </ligand>
</feature>
<feature type="binding site" evidence="1">
    <location>
        <position position="103"/>
    </location>
    <ligand>
        <name>shikimate</name>
        <dbReference type="ChEBI" id="CHEBI:36208"/>
    </ligand>
</feature>
<feature type="binding site" evidence="1">
    <location>
        <begin position="128"/>
        <end position="132"/>
    </location>
    <ligand>
        <name>NADP(+)</name>
        <dbReference type="ChEBI" id="CHEBI:58349"/>
    </ligand>
</feature>
<feature type="binding site" evidence="1">
    <location>
        <position position="223"/>
    </location>
    <ligand>
        <name>NADP(+)</name>
        <dbReference type="ChEBI" id="CHEBI:58349"/>
    </ligand>
</feature>
<feature type="binding site" evidence="1">
    <location>
        <position position="243"/>
    </location>
    <ligand>
        <name>NADP(+)</name>
        <dbReference type="ChEBI" id="CHEBI:58349"/>
    </ligand>
</feature>
<comment type="function">
    <text evidence="1">Involved in the biosynthesis of the chorismate, which leads to the biosynthesis of aromatic amino acids. Catalyzes the reversible NADPH linked reduction of 3-dehydroshikimate (DHSA) to yield shikimate (SA).</text>
</comment>
<comment type="catalytic activity">
    <reaction evidence="1">
        <text>shikimate + NADP(+) = 3-dehydroshikimate + NADPH + H(+)</text>
        <dbReference type="Rhea" id="RHEA:17737"/>
        <dbReference type="ChEBI" id="CHEBI:15378"/>
        <dbReference type="ChEBI" id="CHEBI:16630"/>
        <dbReference type="ChEBI" id="CHEBI:36208"/>
        <dbReference type="ChEBI" id="CHEBI:57783"/>
        <dbReference type="ChEBI" id="CHEBI:58349"/>
        <dbReference type="EC" id="1.1.1.25"/>
    </reaction>
</comment>
<comment type="pathway">
    <text evidence="1">Metabolic intermediate biosynthesis; chorismate biosynthesis; chorismate from D-erythrose 4-phosphate and phosphoenolpyruvate: step 4/7.</text>
</comment>
<comment type="subunit">
    <text evidence="1">Homodimer.</text>
</comment>
<comment type="similarity">
    <text evidence="1">Belongs to the shikimate dehydrogenase family.</text>
</comment>
<keyword id="KW-0028">Amino-acid biosynthesis</keyword>
<keyword id="KW-0057">Aromatic amino acid biosynthesis</keyword>
<keyword id="KW-0521">NADP</keyword>
<keyword id="KW-0560">Oxidoreductase</keyword>
<keyword id="KW-1185">Reference proteome</keyword>
<dbReference type="EC" id="1.1.1.25" evidence="1"/>
<dbReference type="EMBL" id="AE008922">
    <property type="protein sequence ID" value="AAM43174.1"/>
    <property type="molecule type" value="Genomic_DNA"/>
</dbReference>
<dbReference type="RefSeq" id="NP_639292.1">
    <property type="nucleotide sequence ID" value="NC_003902.1"/>
</dbReference>
<dbReference type="RefSeq" id="WP_011039025.1">
    <property type="nucleotide sequence ID" value="NC_003902.1"/>
</dbReference>
<dbReference type="SMR" id="Q8P3W6"/>
<dbReference type="STRING" id="190485.XCC3953"/>
<dbReference type="EnsemblBacteria" id="AAM43174">
    <property type="protein sequence ID" value="AAM43174"/>
    <property type="gene ID" value="XCC3953"/>
</dbReference>
<dbReference type="KEGG" id="xcc:XCC3953"/>
<dbReference type="PATRIC" id="fig|190485.4.peg.4231"/>
<dbReference type="eggNOG" id="COG0169">
    <property type="taxonomic scope" value="Bacteria"/>
</dbReference>
<dbReference type="HOGENOM" id="CLU_044063_2_1_6"/>
<dbReference type="OrthoDB" id="9776868at2"/>
<dbReference type="UniPathway" id="UPA00053">
    <property type="reaction ID" value="UER00087"/>
</dbReference>
<dbReference type="Proteomes" id="UP000001010">
    <property type="component" value="Chromosome"/>
</dbReference>
<dbReference type="GO" id="GO:0005829">
    <property type="term" value="C:cytosol"/>
    <property type="evidence" value="ECO:0000318"/>
    <property type="project" value="GO_Central"/>
</dbReference>
<dbReference type="GO" id="GO:0050661">
    <property type="term" value="F:NADP binding"/>
    <property type="evidence" value="ECO:0000318"/>
    <property type="project" value="GO_Central"/>
</dbReference>
<dbReference type="GO" id="GO:0004764">
    <property type="term" value="F:shikimate 3-dehydrogenase (NADP+) activity"/>
    <property type="evidence" value="ECO:0000318"/>
    <property type="project" value="GO_Central"/>
</dbReference>
<dbReference type="GO" id="GO:0008652">
    <property type="term" value="P:amino acid biosynthetic process"/>
    <property type="evidence" value="ECO:0007669"/>
    <property type="project" value="UniProtKB-KW"/>
</dbReference>
<dbReference type="GO" id="GO:0009073">
    <property type="term" value="P:aromatic amino acid family biosynthetic process"/>
    <property type="evidence" value="ECO:0007669"/>
    <property type="project" value="UniProtKB-KW"/>
</dbReference>
<dbReference type="GO" id="GO:0009423">
    <property type="term" value="P:chorismate biosynthetic process"/>
    <property type="evidence" value="ECO:0000318"/>
    <property type="project" value="GO_Central"/>
</dbReference>
<dbReference type="GO" id="GO:0019632">
    <property type="term" value="P:shikimate metabolic process"/>
    <property type="evidence" value="ECO:0000318"/>
    <property type="project" value="GO_Central"/>
</dbReference>
<dbReference type="CDD" id="cd01065">
    <property type="entry name" value="NAD_bind_Shikimate_DH"/>
    <property type="match status" value="1"/>
</dbReference>
<dbReference type="FunFam" id="3.40.50.10860:FF:000006">
    <property type="entry name" value="Shikimate dehydrogenase (NADP(+))"/>
    <property type="match status" value="1"/>
</dbReference>
<dbReference type="Gene3D" id="3.40.50.10860">
    <property type="entry name" value="Leucine Dehydrogenase, chain A, domain 1"/>
    <property type="match status" value="1"/>
</dbReference>
<dbReference type="Gene3D" id="3.40.50.720">
    <property type="entry name" value="NAD(P)-binding Rossmann-like Domain"/>
    <property type="match status" value="1"/>
</dbReference>
<dbReference type="HAMAP" id="MF_00222">
    <property type="entry name" value="Shikimate_DH_AroE"/>
    <property type="match status" value="1"/>
</dbReference>
<dbReference type="InterPro" id="IPR046346">
    <property type="entry name" value="Aminoacid_DH-like_N_sf"/>
</dbReference>
<dbReference type="InterPro" id="IPR036291">
    <property type="entry name" value="NAD(P)-bd_dom_sf"/>
</dbReference>
<dbReference type="InterPro" id="IPR041121">
    <property type="entry name" value="SDH_C"/>
</dbReference>
<dbReference type="InterPro" id="IPR011342">
    <property type="entry name" value="Shikimate_DH"/>
</dbReference>
<dbReference type="InterPro" id="IPR013708">
    <property type="entry name" value="Shikimate_DH-bd_N"/>
</dbReference>
<dbReference type="InterPro" id="IPR022893">
    <property type="entry name" value="Shikimate_DH_fam"/>
</dbReference>
<dbReference type="InterPro" id="IPR006151">
    <property type="entry name" value="Shikm_DH/Glu-tRNA_Rdtase"/>
</dbReference>
<dbReference type="NCBIfam" id="TIGR00507">
    <property type="entry name" value="aroE"/>
    <property type="match status" value="1"/>
</dbReference>
<dbReference type="NCBIfam" id="NF001310">
    <property type="entry name" value="PRK00258.1-2"/>
    <property type="match status" value="1"/>
</dbReference>
<dbReference type="PANTHER" id="PTHR21089:SF1">
    <property type="entry name" value="BIFUNCTIONAL 3-DEHYDROQUINATE DEHYDRATASE_SHIKIMATE DEHYDROGENASE, CHLOROPLASTIC"/>
    <property type="match status" value="1"/>
</dbReference>
<dbReference type="PANTHER" id="PTHR21089">
    <property type="entry name" value="SHIKIMATE DEHYDROGENASE"/>
    <property type="match status" value="1"/>
</dbReference>
<dbReference type="Pfam" id="PF18317">
    <property type="entry name" value="SDH_C"/>
    <property type="match status" value="1"/>
</dbReference>
<dbReference type="Pfam" id="PF01488">
    <property type="entry name" value="Shikimate_DH"/>
    <property type="match status" value="1"/>
</dbReference>
<dbReference type="Pfam" id="PF08501">
    <property type="entry name" value="Shikimate_dh_N"/>
    <property type="match status" value="1"/>
</dbReference>
<dbReference type="SUPFAM" id="SSF53223">
    <property type="entry name" value="Aminoacid dehydrogenase-like, N-terminal domain"/>
    <property type="match status" value="1"/>
</dbReference>
<dbReference type="SUPFAM" id="SSF51735">
    <property type="entry name" value="NAD(P)-binding Rossmann-fold domains"/>
    <property type="match status" value="1"/>
</dbReference>